<protein>
    <recommendedName>
        <fullName>Carbonic anhydrase 2</fullName>
        <shortName>Beta-CA 2</shortName>
        <ecNumber>4.2.1.1</ecNumber>
    </recommendedName>
    <alternativeName>
        <fullName>Carbonate dehydratase 2</fullName>
    </alternativeName>
    <alternativeName>
        <fullName>mtCA 2</fullName>
    </alternativeName>
</protein>
<feature type="chain" id="PRO_0000426939" description="Carbonic anhydrase 2">
    <location>
        <begin position="1"/>
        <end position="207"/>
    </location>
</feature>
<feature type="binding site" evidence="1">
    <location>
        <position position="51"/>
    </location>
    <ligand>
        <name>Zn(2+)</name>
        <dbReference type="ChEBI" id="CHEBI:29105"/>
    </ligand>
</feature>
<feature type="binding site" evidence="1">
    <location>
        <position position="53"/>
    </location>
    <ligand>
        <name>Zn(2+)</name>
        <dbReference type="ChEBI" id="CHEBI:29105"/>
    </ligand>
</feature>
<feature type="binding site" evidence="1">
    <location>
        <position position="104"/>
    </location>
    <ligand>
        <name>Zn(2+)</name>
        <dbReference type="ChEBI" id="CHEBI:29105"/>
    </ligand>
</feature>
<feature type="binding site" evidence="1">
    <location>
        <position position="107"/>
    </location>
    <ligand>
        <name>Zn(2+)</name>
        <dbReference type="ChEBI" id="CHEBI:29105"/>
    </ligand>
</feature>
<name>MTCA2_MYCTO</name>
<dbReference type="EC" id="4.2.1.1"/>
<dbReference type="EMBL" id="AE000516">
    <property type="protein sequence ID" value="AAK48052.1"/>
    <property type="molecule type" value="Genomic_DNA"/>
</dbReference>
<dbReference type="PIR" id="E70804">
    <property type="entry name" value="E70804"/>
</dbReference>
<dbReference type="RefSeq" id="WP_003419492.1">
    <property type="nucleotide sequence ID" value="NZ_KK341227.1"/>
</dbReference>
<dbReference type="SMR" id="P9WPJ8"/>
<dbReference type="GeneID" id="45427576"/>
<dbReference type="KEGG" id="mtc:MT3694"/>
<dbReference type="PATRIC" id="fig|83331.31.peg.3977"/>
<dbReference type="HOGENOM" id="CLU_053879_4_1_11"/>
<dbReference type="Proteomes" id="UP000001020">
    <property type="component" value="Chromosome"/>
</dbReference>
<dbReference type="GO" id="GO:0004089">
    <property type="term" value="F:carbonate dehydratase activity"/>
    <property type="evidence" value="ECO:0007669"/>
    <property type="project" value="UniProtKB-EC"/>
</dbReference>
<dbReference type="GO" id="GO:0008270">
    <property type="term" value="F:zinc ion binding"/>
    <property type="evidence" value="ECO:0007669"/>
    <property type="project" value="InterPro"/>
</dbReference>
<dbReference type="GO" id="GO:0015976">
    <property type="term" value="P:carbon utilization"/>
    <property type="evidence" value="ECO:0007669"/>
    <property type="project" value="InterPro"/>
</dbReference>
<dbReference type="CDD" id="cd03378">
    <property type="entry name" value="beta_CA_cladeC"/>
    <property type="match status" value="1"/>
</dbReference>
<dbReference type="FunFam" id="3.40.1050.10:FF:000006">
    <property type="entry name" value="Carbonic anhydrase"/>
    <property type="match status" value="1"/>
</dbReference>
<dbReference type="Gene3D" id="3.40.1050.10">
    <property type="entry name" value="Carbonic anhydrase"/>
    <property type="match status" value="1"/>
</dbReference>
<dbReference type="InterPro" id="IPR001765">
    <property type="entry name" value="Carbonic_anhydrase"/>
</dbReference>
<dbReference type="InterPro" id="IPR015892">
    <property type="entry name" value="Carbonic_anhydrase_CS"/>
</dbReference>
<dbReference type="InterPro" id="IPR036874">
    <property type="entry name" value="Carbonic_anhydrase_sf"/>
</dbReference>
<dbReference type="PANTHER" id="PTHR11002">
    <property type="entry name" value="CARBONIC ANHYDRASE"/>
    <property type="match status" value="1"/>
</dbReference>
<dbReference type="PANTHER" id="PTHR11002:SF79">
    <property type="entry name" value="CARBONIC ANHYDRASE 2"/>
    <property type="match status" value="1"/>
</dbReference>
<dbReference type="Pfam" id="PF00484">
    <property type="entry name" value="Pro_CA"/>
    <property type="match status" value="1"/>
</dbReference>
<dbReference type="SMART" id="SM00947">
    <property type="entry name" value="Pro_CA"/>
    <property type="match status" value="1"/>
</dbReference>
<dbReference type="SUPFAM" id="SSF53056">
    <property type="entry name" value="beta-carbonic anhydrase, cab"/>
    <property type="match status" value="1"/>
</dbReference>
<dbReference type="PROSITE" id="PS00704">
    <property type="entry name" value="PROK_CO2_ANHYDRASE_1"/>
    <property type="match status" value="1"/>
</dbReference>
<dbReference type="PROSITE" id="PS00705">
    <property type="entry name" value="PROK_CO2_ANHYDRASE_2"/>
    <property type="match status" value="1"/>
</dbReference>
<organism>
    <name type="scientific">Mycobacterium tuberculosis (strain CDC 1551 / Oshkosh)</name>
    <dbReference type="NCBI Taxonomy" id="83331"/>
    <lineage>
        <taxon>Bacteria</taxon>
        <taxon>Bacillati</taxon>
        <taxon>Actinomycetota</taxon>
        <taxon>Actinomycetes</taxon>
        <taxon>Mycobacteriales</taxon>
        <taxon>Mycobacteriaceae</taxon>
        <taxon>Mycobacterium</taxon>
        <taxon>Mycobacterium tuberculosis complex</taxon>
    </lineage>
</organism>
<gene>
    <name type="primary">mtcA2</name>
    <name type="synonym">canB</name>
    <name type="synonym">cynT</name>
    <name type="ordered locus">MT3694</name>
</gene>
<reference key="1">
    <citation type="journal article" date="2002" name="J. Bacteriol.">
        <title>Whole-genome comparison of Mycobacterium tuberculosis clinical and laboratory strains.</title>
        <authorList>
            <person name="Fleischmann R.D."/>
            <person name="Alland D."/>
            <person name="Eisen J.A."/>
            <person name="Carpenter L."/>
            <person name="White O."/>
            <person name="Peterson J.D."/>
            <person name="DeBoy R.T."/>
            <person name="Dodson R.J."/>
            <person name="Gwinn M.L."/>
            <person name="Haft D.H."/>
            <person name="Hickey E.K."/>
            <person name="Kolonay J.F."/>
            <person name="Nelson W.C."/>
            <person name="Umayam L.A."/>
            <person name="Ermolaeva M.D."/>
            <person name="Salzberg S.L."/>
            <person name="Delcher A."/>
            <person name="Utterback T.R."/>
            <person name="Weidman J.F."/>
            <person name="Khouri H.M."/>
            <person name="Gill J."/>
            <person name="Mikula A."/>
            <person name="Bishai W."/>
            <person name="Jacobs W.R. Jr."/>
            <person name="Venter J.C."/>
            <person name="Fraser C.M."/>
        </authorList>
    </citation>
    <scope>NUCLEOTIDE SEQUENCE [LARGE SCALE GENOMIC DNA]</scope>
    <source>
        <strain>CDC 1551 / Oshkosh</strain>
    </source>
</reference>
<keyword id="KW-0456">Lyase</keyword>
<keyword id="KW-0479">Metal-binding</keyword>
<keyword id="KW-1185">Reference proteome</keyword>
<keyword id="KW-0862">Zinc</keyword>
<comment type="function">
    <text evidence="1">Catalyzes the reversible hydration of carbon dioxide to form bicarbonate.</text>
</comment>
<comment type="catalytic activity">
    <reaction>
        <text>hydrogencarbonate + H(+) = CO2 + H2O</text>
        <dbReference type="Rhea" id="RHEA:10748"/>
        <dbReference type="ChEBI" id="CHEBI:15377"/>
        <dbReference type="ChEBI" id="CHEBI:15378"/>
        <dbReference type="ChEBI" id="CHEBI:16526"/>
        <dbReference type="ChEBI" id="CHEBI:17544"/>
        <dbReference type="EC" id="4.2.1.1"/>
    </reaction>
</comment>
<comment type="cofactor">
    <cofactor evidence="1">
        <name>Zn(2+)</name>
        <dbReference type="ChEBI" id="CHEBI:29105"/>
    </cofactor>
    <text evidence="1">Binds 1 zinc ion per subunit.</text>
</comment>
<comment type="similarity">
    <text evidence="2">Belongs to the beta-class carbonic anhydrase family.</text>
</comment>
<accession>P9WPJ8</accession>
<accession>L0TFY5</accession>
<accession>O53573</accession>
<accession>Q7D582</accession>
<evidence type="ECO:0000250" key="1"/>
<evidence type="ECO:0000305" key="2"/>
<proteinExistence type="inferred from homology"/>
<sequence length="207" mass="21792">MPNTNPVAAWKALKEGNERFVAGRPQHPSQSVDHRAGLAAGQKPTAVIFGCADSRVAAEIIFDQGLGDMFVVRTAGHVIDSAVLGSIEYAVTVLNVPLIVVLGHDSCGAVNAALAAINDGTLPGGYVRDVVERVAPSVLLGRRDGLSRVDEFEQRHVHETVAILMARSSAISERIAGGSLAIVGVTYQLDDGRAVLRDHIGNIGEEV</sequence>